<accession>B2T6M3</accession>
<keyword id="KW-0963">Cytoplasm</keyword>
<keyword id="KW-0448">Lipopolysaccharide biosynthesis</keyword>
<keyword id="KW-0548">Nucleotidyltransferase</keyword>
<keyword id="KW-0808">Transferase</keyword>
<comment type="function">
    <text evidence="1">Activates KDO (a required 8-carbon sugar) for incorporation into bacterial lipopolysaccharide in Gram-negative bacteria.</text>
</comment>
<comment type="catalytic activity">
    <reaction evidence="1">
        <text>3-deoxy-alpha-D-manno-oct-2-ulosonate + CTP = CMP-3-deoxy-beta-D-manno-octulosonate + diphosphate</text>
        <dbReference type="Rhea" id="RHEA:23448"/>
        <dbReference type="ChEBI" id="CHEBI:33019"/>
        <dbReference type="ChEBI" id="CHEBI:37563"/>
        <dbReference type="ChEBI" id="CHEBI:85986"/>
        <dbReference type="ChEBI" id="CHEBI:85987"/>
        <dbReference type="EC" id="2.7.7.38"/>
    </reaction>
</comment>
<comment type="pathway">
    <text evidence="1">Nucleotide-sugar biosynthesis; CMP-3-deoxy-D-manno-octulosonate biosynthesis; CMP-3-deoxy-D-manno-octulosonate from 3-deoxy-D-manno-octulosonate and CTP: step 1/1.</text>
</comment>
<comment type="pathway">
    <text evidence="1">Bacterial outer membrane biogenesis; lipopolysaccharide biosynthesis.</text>
</comment>
<comment type="subcellular location">
    <subcellularLocation>
        <location evidence="1">Cytoplasm</location>
    </subcellularLocation>
</comment>
<comment type="similarity">
    <text evidence="1">Belongs to the KdsB family.</text>
</comment>
<reference key="1">
    <citation type="journal article" date="2011" name="J. Bacteriol.">
        <title>Complete genome sequence of the plant growth-promoting endophyte Burkholderia phytofirmans strain PsJN.</title>
        <authorList>
            <person name="Weilharter A."/>
            <person name="Mitter B."/>
            <person name="Shin M.V."/>
            <person name="Chain P.S."/>
            <person name="Nowak J."/>
            <person name="Sessitsch A."/>
        </authorList>
    </citation>
    <scope>NUCLEOTIDE SEQUENCE [LARGE SCALE GENOMIC DNA]</scope>
    <source>
        <strain>DSM 17436 / LMG 22146 / PsJN</strain>
    </source>
</reference>
<gene>
    <name evidence="1" type="primary">kdsB1</name>
    <name type="ordered locus">Bphyt_3198</name>
</gene>
<sequence>MTHPNTATPPFIAVVPARLASTRLPNKPLADIGGKPMVVRVAERARESGAQQVLVASDAQAVLDAARDHGFEAVLTRADHPSGTDRLAEVAAQFGWSDDTIVVNVQGDEPLIDPALVCGVASHLAASHGCAIATAAHPITDPAEIFNPNVVKVVLDARGVALYFSRAPIPWARDAYQPHWPNVASMPAPHAPAVVHRHIGLYAYRAQFLRTYPSLAISPIEQVEALEQLRAMWHGERIAVLVTHEVPLPGVDTPADLARVQALFGS</sequence>
<protein>
    <recommendedName>
        <fullName evidence="1">3-deoxy-manno-octulosonate cytidylyltransferase 1</fullName>
        <ecNumber evidence="1">2.7.7.38</ecNumber>
    </recommendedName>
    <alternativeName>
        <fullName evidence="1">CMP-2-keto-3-deoxyoctulosonic acid synthase 1</fullName>
        <shortName evidence="1">CKS 1</shortName>
        <shortName evidence="1">CMP-KDO synthase 1</shortName>
    </alternativeName>
</protein>
<feature type="chain" id="PRO_0000370033" description="3-deoxy-manno-octulosonate cytidylyltransferase 1">
    <location>
        <begin position="1"/>
        <end position="266"/>
    </location>
</feature>
<organism>
    <name type="scientific">Paraburkholderia phytofirmans (strain DSM 17436 / LMG 22146 / PsJN)</name>
    <name type="common">Burkholderia phytofirmans</name>
    <dbReference type="NCBI Taxonomy" id="398527"/>
    <lineage>
        <taxon>Bacteria</taxon>
        <taxon>Pseudomonadati</taxon>
        <taxon>Pseudomonadota</taxon>
        <taxon>Betaproteobacteria</taxon>
        <taxon>Burkholderiales</taxon>
        <taxon>Burkholderiaceae</taxon>
        <taxon>Paraburkholderia</taxon>
    </lineage>
</organism>
<name>KDSB1_PARPJ</name>
<dbReference type="EC" id="2.7.7.38" evidence="1"/>
<dbReference type="EMBL" id="CP001052">
    <property type="protein sequence ID" value="ACD17590.1"/>
    <property type="molecule type" value="Genomic_DNA"/>
</dbReference>
<dbReference type="RefSeq" id="WP_012434160.1">
    <property type="nucleotide sequence ID" value="NC_010681.1"/>
</dbReference>
<dbReference type="SMR" id="B2T6M3"/>
<dbReference type="STRING" id="398527.Bphyt_3198"/>
<dbReference type="KEGG" id="bpy:Bphyt_3198"/>
<dbReference type="eggNOG" id="COG1212">
    <property type="taxonomic scope" value="Bacteria"/>
</dbReference>
<dbReference type="HOGENOM" id="CLU_065038_1_0_4"/>
<dbReference type="OrthoDB" id="9815559at2"/>
<dbReference type="UniPathway" id="UPA00030"/>
<dbReference type="UniPathway" id="UPA00358">
    <property type="reaction ID" value="UER00476"/>
</dbReference>
<dbReference type="Proteomes" id="UP000001739">
    <property type="component" value="Chromosome 1"/>
</dbReference>
<dbReference type="GO" id="GO:0005829">
    <property type="term" value="C:cytosol"/>
    <property type="evidence" value="ECO:0007669"/>
    <property type="project" value="TreeGrafter"/>
</dbReference>
<dbReference type="GO" id="GO:0008690">
    <property type="term" value="F:3-deoxy-manno-octulosonate cytidylyltransferase activity"/>
    <property type="evidence" value="ECO:0007669"/>
    <property type="project" value="UniProtKB-UniRule"/>
</dbReference>
<dbReference type="GO" id="GO:0033468">
    <property type="term" value="P:CMP-keto-3-deoxy-D-manno-octulosonic acid biosynthetic process"/>
    <property type="evidence" value="ECO:0007669"/>
    <property type="project" value="UniProtKB-UniRule"/>
</dbReference>
<dbReference type="GO" id="GO:0009103">
    <property type="term" value="P:lipopolysaccharide biosynthetic process"/>
    <property type="evidence" value="ECO:0007669"/>
    <property type="project" value="UniProtKB-UniRule"/>
</dbReference>
<dbReference type="CDD" id="cd02517">
    <property type="entry name" value="CMP-KDO-Synthetase"/>
    <property type="match status" value="1"/>
</dbReference>
<dbReference type="FunFam" id="3.90.550.10:FF:000011">
    <property type="entry name" value="3-deoxy-manno-octulosonate cytidylyltransferase"/>
    <property type="match status" value="1"/>
</dbReference>
<dbReference type="Gene3D" id="3.90.550.10">
    <property type="entry name" value="Spore Coat Polysaccharide Biosynthesis Protein SpsA, Chain A"/>
    <property type="match status" value="1"/>
</dbReference>
<dbReference type="HAMAP" id="MF_00057">
    <property type="entry name" value="KdsB"/>
    <property type="match status" value="1"/>
</dbReference>
<dbReference type="InterPro" id="IPR003329">
    <property type="entry name" value="Cytidylyl_trans"/>
</dbReference>
<dbReference type="InterPro" id="IPR004528">
    <property type="entry name" value="KdsB"/>
</dbReference>
<dbReference type="InterPro" id="IPR029044">
    <property type="entry name" value="Nucleotide-diphossugar_trans"/>
</dbReference>
<dbReference type="NCBIfam" id="TIGR00466">
    <property type="entry name" value="kdsB"/>
    <property type="match status" value="1"/>
</dbReference>
<dbReference type="NCBIfam" id="NF003952">
    <property type="entry name" value="PRK05450.1-5"/>
    <property type="match status" value="1"/>
</dbReference>
<dbReference type="NCBIfam" id="NF009905">
    <property type="entry name" value="PRK13368.1"/>
    <property type="match status" value="1"/>
</dbReference>
<dbReference type="PANTHER" id="PTHR42866">
    <property type="entry name" value="3-DEOXY-MANNO-OCTULOSONATE CYTIDYLYLTRANSFERASE"/>
    <property type="match status" value="1"/>
</dbReference>
<dbReference type="PANTHER" id="PTHR42866:SF2">
    <property type="entry name" value="3-DEOXY-MANNO-OCTULOSONATE CYTIDYLYLTRANSFERASE, MITOCHONDRIAL"/>
    <property type="match status" value="1"/>
</dbReference>
<dbReference type="Pfam" id="PF02348">
    <property type="entry name" value="CTP_transf_3"/>
    <property type="match status" value="1"/>
</dbReference>
<dbReference type="SUPFAM" id="SSF53448">
    <property type="entry name" value="Nucleotide-diphospho-sugar transferases"/>
    <property type="match status" value="1"/>
</dbReference>
<proteinExistence type="inferred from homology"/>
<evidence type="ECO:0000255" key="1">
    <source>
        <dbReference type="HAMAP-Rule" id="MF_00057"/>
    </source>
</evidence>